<keyword id="KW-0963">Cytoplasm</keyword>
<keyword id="KW-0396">Initiation factor</keyword>
<keyword id="KW-0648">Protein biosynthesis</keyword>
<sequence length="175" mass="20244">MSTIAKDQTQINDKIRAKELRLISQDGEQIGVKSKREALEMAERVDLDLVVVAPNAKPPVARIMDYGKFKFEQQKKEKEMKKKQKIINVKEIRLSPTIEEHDFQTKLKNGRKFLTKGDKCKVSIRFRGRAITHKEIGQRVLEKYADECKDIATVEQKPKMDGRQMFIMLAPTAEK</sequence>
<dbReference type="EMBL" id="BX571856">
    <property type="protein sequence ID" value="CAG40751.1"/>
    <property type="molecule type" value="Genomic_DNA"/>
</dbReference>
<dbReference type="RefSeq" id="WP_001791219.1">
    <property type="nucleotide sequence ID" value="NC_002952.2"/>
</dbReference>
<dbReference type="SMR" id="Q6GG25"/>
<dbReference type="KEGG" id="sar:SAR1760"/>
<dbReference type="HOGENOM" id="CLU_054919_3_2_9"/>
<dbReference type="Proteomes" id="UP000000596">
    <property type="component" value="Chromosome"/>
</dbReference>
<dbReference type="GO" id="GO:0005829">
    <property type="term" value="C:cytosol"/>
    <property type="evidence" value="ECO:0007669"/>
    <property type="project" value="TreeGrafter"/>
</dbReference>
<dbReference type="GO" id="GO:0016020">
    <property type="term" value="C:membrane"/>
    <property type="evidence" value="ECO:0007669"/>
    <property type="project" value="TreeGrafter"/>
</dbReference>
<dbReference type="GO" id="GO:0043022">
    <property type="term" value="F:ribosome binding"/>
    <property type="evidence" value="ECO:0007669"/>
    <property type="project" value="TreeGrafter"/>
</dbReference>
<dbReference type="GO" id="GO:0003743">
    <property type="term" value="F:translation initiation factor activity"/>
    <property type="evidence" value="ECO:0007669"/>
    <property type="project" value="UniProtKB-UniRule"/>
</dbReference>
<dbReference type="GO" id="GO:0032790">
    <property type="term" value="P:ribosome disassembly"/>
    <property type="evidence" value="ECO:0007669"/>
    <property type="project" value="TreeGrafter"/>
</dbReference>
<dbReference type="FunFam" id="3.10.20.80:FF:000001">
    <property type="entry name" value="Translation initiation factor IF-3"/>
    <property type="match status" value="1"/>
</dbReference>
<dbReference type="FunFam" id="3.30.110.10:FF:000001">
    <property type="entry name" value="Translation initiation factor IF-3"/>
    <property type="match status" value="1"/>
</dbReference>
<dbReference type="Gene3D" id="3.30.110.10">
    <property type="entry name" value="Translation initiation factor 3 (IF-3), C-terminal domain"/>
    <property type="match status" value="1"/>
</dbReference>
<dbReference type="Gene3D" id="3.10.20.80">
    <property type="entry name" value="Translation initiation factor 3 (IF-3), N-terminal domain"/>
    <property type="match status" value="1"/>
</dbReference>
<dbReference type="HAMAP" id="MF_00080">
    <property type="entry name" value="IF_3"/>
    <property type="match status" value="1"/>
</dbReference>
<dbReference type="InterPro" id="IPR036788">
    <property type="entry name" value="T_IF-3_C_sf"/>
</dbReference>
<dbReference type="InterPro" id="IPR036787">
    <property type="entry name" value="T_IF-3_N_sf"/>
</dbReference>
<dbReference type="InterPro" id="IPR019813">
    <property type="entry name" value="Translation_initiation_fac3_CS"/>
</dbReference>
<dbReference type="InterPro" id="IPR001288">
    <property type="entry name" value="Translation_initiation_fac_3"/>
</dbReference>
<dbReference type="InterPro" id="IPR019815">
    <property type="entry name" value="Translation_initiation_fac_3_C"/>
</dbReference>
<dbReference type="InterPro" id="IPR019814">
    <property type="entry name" value="Translation_initiation_fac_3_N"/>
</dbReference>
<dbReference type="NCBIfam" id="TIGR00168">
    <property type="entry name" value="infC"/>
    <property type="match status" value="1"/>
</dbReference>
<dbReference type="PANTHER" id="PTHR10938">
    <property type="entry name" value="TRANSLATION INITIATION FACTOR IF-3"/>
    <property type="match status" value="1"/>
</dbReference>
<dbReference type="PANTHER" id="PTHR10938:SF0">
    <property type="entry name" value="TRANSLATION INITIATION FACTOR IF-3, MITOCHONDRIAL"/>
    <property type="match status" value="1"/>
</dbReference>
<dbReference type="Pfam" id="PF00707">
    <property type="entry name" value="IF3_C"/>
    <property type="match status" value="1"/>
</dbReference>
<dbReference type="Pfam" id="PF05198">
    <property type="entry name" value="IF3_N"/>
    <property type="match status" value="1"/>
</dbReference>
<dbReference type="SUPFAM" id="SSF55200">
    <property type="entry name" value="Translation initiation factor IF3, C-terminal domain"/>
    <property type="match status" value="1"/>
</dbReference>
<dbReference type="SUPFAM" id="SSF54364">
    <property type="entry name" value="Translation initiation factor IF3, N-terminal domain"/>
    <property type="match status" value="1"/>
</dbReference>
<dbReference type="PROSITE" id="PS00938">
    <property type="entry name" value="IF3"/>
    <property type="match status" value="1"/>
</dbReference>
<evidence type="ECO:0000255" key="1">
    <source>
        <dbReference type="HAMAP-Rule" id="MF_00080"/>
    </source>
</evidence>
<gene>
    <name evidence="1" type="primary">infC</name>
    <name type="ordered locus">SAR1760</name>
</gene>
<comment type="function">
    <text evidence="1">IF-3 binds to the 30S ribosomal subunit and shifts the equilibrium between 70S ribosomes and their 50S and 30S subunits in favor of the free subunits, thus enhancing the availability of 30S subunits on which protein synthesis initiation begins.</text>
</comment>
<comment type="subunit">
    <text evidence="1">Monomer.</text>
</comment>
<comment type="subcellular location">
    <subcellularLocation>
        <location evidence="1">Cytoplasm</location>
    </subcellularLocation>
</comment>
<comment type="similarity">
    <text evidence="1">Belongs to the IF-3 family.</text>
</comment>
<accession>Q6GG25</accession>
<protein>
    <recommendedName>
        <fullName evidence="1">Translation initiation factor IF-3</fullName>
    </recommendedName>
</protein>
<organism>
    <name type="scientific">Staphylococcus aureus (strain MRSA252)</name>
    <dbReference type="NCBI Taxonomy" id="282458"/>
    <lineage>
        <taxon>Bacteria</taxon>
        <taxon>Bacillati</taxon>
        <taxon>Bacillota</taxon>
        <taxon>Bacilli</taxon>
        <taxon>Bacillales</taxon>
        <taxon>Staphylococcaceae</taxon>
        <taxon>Staphylococcus</taxon>
    </lineage>
</organism>
<feature type="chain" id="PRO_0000177578" description="Translation initiation factor IF-3">
    <location>
        <begin position="1"/>
        <end position="175"/>
    </location>
</feature>
<name>IF3_STAAR</name>
<reference key="1">
    <citation type="journal article" date="2004" name="Proc. Natl. Acad. Sci. U.S.A.">
        <title>Complete genomes of two clinical Staphylococcus aureus strains: evidence for the rapid evolution of virulence and drug resistance.</title>
        <authorList>
            <person name="Holden M.T.G."/>
            <person name="Feil E.J."/>
            <person name="Lindsay J.A."/>
            <person name="Peacock S.J."/>
            <person name="Day N.P.J."/>
            <person name="Enright M.C."/>
            <person name="Foster T.J."/>
            <person name="Moore C.E."/>
            <person name="Hurst L."/>
            <person name="Atkin R."/>
            <person name="Barron A."/>
            <person name="Bason N."/>
            <person name="Bentley S.D."/>
            <person name="Chillingworth C."/>
            <person name="Chillingworth T."/>
            <person name="Churcher C."/>
            <person name="Clark L."/>
            <person name="Corton C."/>
            <person name="Cronin A."/>
            <person name="Doggett J."/>
            <person name="Dowd L."/>
            <person name="Feltwell T."/>
            <person name="Hance Z."/>
            <person name="Harris B."/>
            <person name="Hauser H."/>
            <person name="Holroyd S."/>
            <person name="Jagels K."/>
            <person name="James K.D."/>
            <person name="Lennard N."/>
            <person name="Line A."/>
            <person name="Mayes R."/>
            <person name="Moule S."/>
            <person name="Mungall K."/>
            <person name="Ormond D."/>
            <person name="Quail M.A."/>
            <person name="Rabbinowitsch E."/>
            <person name="Rutherford K.M."/>
            <person name="Sanders M."/>
            <person name="Sharp S."/>
            <person name="Simmonds M."/>
            <person name="Stevens K."/>
            <person name="Whitehead S."/>
            <person name="Barrell B.G."/>
            <person name="Spratt B.G."/>
            <person name="Parkhill J."/>
        </authorList>
    </citation>
    <scope>NUCLEOTIDE SEQUENCE [LARGE SCALE GENOMIC DNA]</scope>
    <source>
        <strain>MRSA252</strain>
    </source>
</reference>
<proteinExistence type="inferred from homology"/>